<feature type="signal peptide" evidence="1">
    <location>
        <begin position="1"/>
        <end position="25"/>
    </location>
</feature>
<feature type="chain" id="PRO_5000240815" description="Membrane-bound lytic murein transglycosylase F">
    <location>
        <begin position="26"/>
        <end position="488"/>
    </location>
</feature>
<feature type="region of interest" description="Non-LT domain" evidence="1">
    <location>
        <begin position="26"/>
        <end position="269"/>
    </location>
</feature>
<feature type="region of interest" description="LT domain" evidence="1">
    <location>
        <begin position="270"/>
        <end position="488"/>
    </location>
</feature>
<feature type="active site" evidence="1">
    <location>
        <position position="316"/>
    </location>
</feature>
<dbReference type="EC" id="4.2.2.n1" evidence="1"/>
<dbReference type="EMBL" id="CP000680">
    <property type="protein sequence ID" value="ABP86167.1"/>
    <property type="molecule type" value="Genomic_DNA"/>
</dbReference>
<dbReference type="SMR" id="A4XXV1"/>
<dbReference type="STRING" id="399739.Pmen_3415"/>
<dbReference type="CAZy" id="GH23">
    <property type="family name" value="Glycoside Hydrolase Family 23"/>
</dbReference>
<dbReference type="KEGG" id="pmy:Pmen_3415"/>
<dbReference type="PATRIC" id="fig|399739.8.peg.3465"/>
<dbReference type="eggNOG" id="COG4623">
    <property type="taxonomic scope" value="Bacteria"/>
</dbReference>
<dbReference type="HOGENOM" id="CLU_027494_0_1_6"/>
<dbReference type="OrthoDB" id="9815002at2"/>
<dbReference type="GO" id="GO:0009279">
    <property type="term" value="C:cell outer membrane"/>
    <property type="evidence" value="ECO:0007669"/>
    <property type="project" value="UniProtKB-SubCell"/>
</dbReference>
<dbReference type="GO" id="GO:0008933">
    <property type="term" value="F:peptidoglycan lytic transglycosylase activity"/>
    <property type="evidence" value="ECO:0007669"/>
    <property type="project" value="UniProtKB-UniRule"/>
</dbReference>
<dbReference type="GO" id="GO:0016998">
    <property type="term" value="P:cell wall macromolecule catabolic process"/>
    <property type="evidence" value="ECO:0007669"/>
    <property type="project" value="UniProtKB-UniRule"/>
</dbReference>
<dbReference type="GO" id="GO:0071555">
    <property type="term" value="P:cell wall organization"/>
    <property type="evidence" value="ECO:0007669"/>
    <property type="project" value="UniProtKB-KW"/>
</dbReference>
<dbReference type="GO" id="GO:0009253">
    <property type="term" value="P:peptidoglycan catabolic process"/>
    <property type="evidence" value="ECO:0007669"/>
    <property type="project" value="TreeGrafter"/>
</dbReference>
<dbReference type="CDD" id="cd13403">
    <property type="entry name" value="MLTF-like"/>
    <property type="match status" value="1"/>
</dbReference>
<dbReference type="CDD" id="cd01009">
    <property type="entry name" value="PBP2_YfhD_N"/>
    <property type="match status" value="1"/>
</dbReference>
<dbReference type="Gene3D" id="1.10.530.10">
    <property type="match status" value="1"/>
</dbReference>
<dbReference type="Gene3D" id="3.40.190.10">
    <property type="entry name" value="Periplasmic binding protein-like II"/>
    <property type="match status" value="2"/>
</dbReference>
<dbReference type="HAMAP" id="MF_02016">
    <property type="entry name" value="MltF"/>
    <property type="match status" value="1"/>
</dbReference>
<dbReference type="InterPro" id="IPR023346">
    <property type="entry name" value="Lysozyme-like_dom_sf"/>
</dbReference>
<dbReference type="InterPro" id="IPR023703">
    <property type="entry name" value="MltF"/>
</dbReference>
<dbReference type="InterPro" id="IPR001638">
    <property type="entry name" value="Solute-binding_3/MltF_N"/>
</dbReference>
<dbReference type="InterPro" id="IPR000189">
    <property type="entry name" value="Transglyc_AS"/>
</dbReference>
<dbReference type="InterPro" id="IPR008258">
    <property type="entry name" value="Transglycosylase_SLT_dom_1"/>
</dbReference>
<dbReference type="NCBIfam" id="NF008112">
    <property type="entry name" value="PRK10859.1"/>
    <property type="match status" value="1"/>
</dbReference>
<dbReference type="PANTHER" id="PTHR35936">
    <property type="entry name" value="MEMBRANE-BOUND LYTIC MUREIN TRANSGLYCOSYLASE F"/>
    <property type="match status" value="1"/>
</dbReference>
<dbReference type="PANTHER" id="PTHR35936:SF32">
    <property type="entry name" value="MEMBRANE-BOUND LYTIC MUREIN TRANSGLYCOSYLASE F"/>
    <property type="match status" value="1"/>
</dbReference>
<dbReference type="Pfam" id="PF00497">
    <property type="entry name" value="SBP_bac_3"/>
    <property type="match status" value="1"/>
</dbReference>
<dbReference type="Pfam" id="PF01464">
    <property type="entry name" value="SLT"/>
    <property type="match status" value="1"/>
</dbReference>
<dbReference type="SMART" id="SM00062">
    <property type="entry name" value="PBPb"/>
    <property type="match status" value="1"/>
</dbReference>
<dbReference type="SUPFAM" id="SSF53955">
    <property type="entry name" value="Lysozyme-like"/>
    <property type="match status" value="1"/>
</dbReference>
<dbReference type="SUPFAM" id="SSF53850">
    <property type="entry name" value="Periplasmic binding protein-like II"/>
    <property type="match status" value="1"/>
</dbReference>
<dbReference type="PROSITE" id="PS51257">
    <property type="entry name" value="PROKAR_LIPOPROTEIN"/>
    <property type="match status" value="1"/>
</dbReference>
<dbReference type="PROSITE" id="PS00922">
    <property type="entry name" value="TRANSGLYCOSYLASE"/>
    <property type="match status" value="1"/>
</dbReference>
<keyword id="KW-0998">Cell outer membrane</keyword>
<keyword id="KW-0961">Cell wall biogenesis/degradation</keyword>
<keyword id="KW-0456">Lyase</keyword>
<keyword id="KW-0472">Membrane</keyword>
<keyword id="KW-0732">Signal</keyword>
<protein>
    <recommendedName>
        <fullName evidence="1">Membrane-bound lytic murein transglycosylase F</fullName>
        <ecNumber evidence="1">4.2.2.n1</ecNumber>
    </recommendedName>
    <alternativeName>
        <fullName evidence="1">Murein lyase F</fullName>
    </alternativeName>
</protein>
<reference key="1">
    <citation type="submission" date="2007-04" db="EMBL/GenBank/DDBJ databases">
        <title>Complete sequence of Pseudomonas mendocina ymp.</title>
        <authorList>
            <consortium name="US DOE Joint Genome Institute"/>
            <person name="Copeland A."/>
            <person name="Lucas S."/>
            <person name="Lapidus A."/>
            <person name="Barry K."/>
            <person name="Glavina del Rio T."/>
            <person name="Dalin E."/>
            <person name="Tice H."/>
            <person name="Pitluck S."/>
            <person name="Kiss H."/>
            <person name="Brettin T."/>
            <person name="Detter J.C."/>
            <person name="Bruce D."/>
            <person name="Han C."/>
            <person name="Schmutz J."/>
            <person name="Larimer F."/>
            <person name="Land M."/>
            <person name="Hauser L."/>
            <person name="Kyrpides N."/>
            <person name="Mikhailova N."/>
            <person name="Hersman L."/>
            <person name="Dubois J."/>
            <person name="Maurice P."/>
            <person name="Richardson P."/>
        </authorList>
    </citation>
    <scope>NUCLEOTIDE SEQUENCE [LARGE SCALE GENOMIC DNA]</scope>
    <source>
        <strain>ymp</strain>
    </source>
</reference>
<accession>A4XXV1</accession>
<gene>
    <name evidence="1" type="primary">mltF</name>
    <name type="ordered locus">Pmen_3415</name>
</gene>
<organism>
    <name type="scientific">Ectopseudomonas mendocina (strain ymp)</name>
    <name type="common">Pseudomonas mendocina</name>
    <dbReference type="NCBI Taxonomy" id="399739"/>
    <lineage>
        <taxon>Bacteria</taxon>
        <taxon>Pseudomonadati</taxon>
        <taxon>Pseudomonadota</taxon>
        <taxon>Gammaproteobacteria</taxon>
        <taxon>Pseudomonadales</taxon>
        <taxon>Pseudomonadaceae</taxon>
        <taxon>Ectopseudomonas</taxon>
    </lineage>
</organism>
<proteinExistence type="inferred from homology"/>
<comment type="function">
    <text evidence="1">Murein-degrading enzyme that degrades murein glycan strands and insoluble, high-molecular weight murein sacculi, with the concomitant formation of a 1,6-anhydromuramoyl product. Lytic transglycosylases (LTs) play an integral role in the metabolism of the peptidoglycan (PG) sacculus. Their lytic action creates space within the PG sacculus to allow for its expansion as well as for the insertion of various structures such as secretion systems and flagella.</text>
</comment>
<comment type="catalytic activity">
    <reaction evidence="1">
        <text>Exolytic cleavage of the (1-&gt;4)-beta-glycosidic linkage between N-acetylmuramic acid (MurNAc) and N-acetylglucosamine (GlcNAc) residues in peptidoglycan, from either the reducing or the non-reducing ends of the peptidoglycan chains, with concomitant formation of a 1,6-anhydrobond in the MurNAc residue.</text>
        <dbReference type="EC" id="4.2.2.n1"/>
    </reaction>
</comment>
<comment type="subcellular location">
    <subcellularLocation>
        <location>Cell outer membrane</location>
        <topology>Peripheral membrane protein</topology>
    </subcellularLocation>
    <text evidence="1">Attached to the inner leaflet of the outer membrane.</text>
</comment>
<comment type="domain">
    <text evidence="1">The N-terminal domain does not have lytic activity and probably modulates enzymatic activity. The C-terminal domain is the catalytic active domain.</text>
</comment>
<comment type="similarity">
    <text evidence="1">In the N-terminal section; belongs to the bacterial solute-binding protein 3 family.</text>
</comment>
<comment type="similarity">
    <text evidence="1">In the C-terminal section; belongs to the transglycosylase Slt family.</text>
</comment>
<evidence type="ECO:0000255" key="1">
    <source>
        <dbReference type="HAMAP-Rule" id="MF_02016"/>
    </source>
</evidence>
<name>MLTF_ECTM1</name>
<sequence length="488" mass="54830">MFARPAIRMRCATGLLAIGTLLMLAGCGEEPKPSVLEQVKAEGELRVVTRNSPATYFQDRNGATGFEYELAKRFATDLGLELKIETADNLDSLFASLGHVDGPVLAAAGLVETPQRQRQARFSVPYLEVTPQIIYRQGETRPTKAEDLLGKRILVLAGSSHAEQLEALKLELPELTFEVSDAVEVVDLLRMVDEGQIDLTLVDSNELAMNQVYFPNVRVAFDLGDTNTMRWAVAPGEDDSLLLEIDAFLERSQANGTLQRLKERYYGHVDVLGYVGAYTFAQHLQQRLPRYEKMFRQAGHANQIDWRLLAAMGYQESLWQPNATSKTGVRGLMMLTQRTAQSVGVSNRLDPKQSIDGGARYFVQIHQQLPESIQEPDRTWFALAAYNVGGGHLEDARKLTEAEGLDPNKWMDVQKILPRLAQKQWYSKTRYGYARGGEPVHFVRNVRRYYDILTWVTQPQLEGTQVAENGIHLPGIDKRTLDEQTPPL</sequence>